<comment type="subcellular location">
    <subcellularLocation>
        <location evidence="1">Cytoplasm</location>
    </subcellularLocation>
</comment>
<comment type="sequence caution" evidence="2">
    <conflict type="erroneous initiation">
        <sequence resource="EMBL-CDS" id="ABE05158"/>
    </conflict>
</comment>
<accession>Q1RHK6</accession>
<organism>
    <name type="scientific">Rickettsia bellii (strain RML369-C)</name>
    <dbReference type="NCBI Taxonomy" id="336407"/>
    <lineage>
        <taxon>Bacteria</taxon>
        <taxon>Pseudomonadati</taxon>
        <taxon>Pseudomonadota</taxon>
        <taxon>Alphaproteobacteria</taxon>
        <taxon>Rickettsiales</taxon>
        <taxon>Rickettsiaceae</taxon>
        <taxon>Rickettsieae</taxon>
        <taxon>Rickettsia</taxon>
        <taxon>belli group</taxon>
    </lineage>
</organism>
<sequence length="70" mass="7664">MTTNIVGKVKWFNPTKNFGFIEQENGGKDVFVHRSAVDAAGLAGLNEGQDVIFDLEDKNGKISAVNLRIK</sequence>
<dbReference type="EMBL" id="CP000087">
    <property type="protein sequence ID" value="ABE05158.1"/>
    <property type="status" value="ALT_INIT"/>
    <property type="molecule type" value="Genomic_DNA"/>
</dbReference>
<dbReference type="RefSeq" id="WP_016948370.1">
    <property type="nucleotide sequence ID" value="NC_007940.1"/>
</dbReference>
<dbReference type="SMR" id="Q1RHK6"/>
<dbReference type="KEGG" id="rbe:RBE_1077"/>
<dbReference type="eggNOG" id="COG1278">
    <property type="taxonomic scope" value="Bacteria"/>
</dbReference>
<dbReference type="HOGENOM" id="CLU_117621_2_0_5"/>
<dbReference type="OrthoDB" id="9801074at2"/>
<dbReference type="Proteomes" id="UP000001951">
    <property type="component" value="Chromosome"/>
</dbReference>
<dbReference type="GO" id="GO:0005829">
    <property type="term" value="C:cytosol"/>
    <property type="evidence" value="ECO:0007669"/>
    <property type="project" value="UniProtKB-ARBA"/>
</dbReference>
<dbReference type="GO" id="GO:0003677">
    <property type="term" value="F:DNA binding"/>
    <property type="evidence" value="ECO:0007669"/>
    <property type="project" value="UniProtKB-KW"/>
</dbReference>
<dbReference type="CDD" id="cd04458">
    <property type="entry name" value="CSP_CDS"/>
    <property type="match status" value="1"/>
</dbReference>
<dbReference type="Gene3D" id="2.40.50.140">
    <property type="entry name" value="Nucleic acid-binding proteins"/>
    <property type="match status" value="1"/>
</dbReference>
<dbReference type="InterPro" id="IPR012156">
    <property type="entry name" value="Cold_shock_CspA"/>
</dbReference>
<dbReference type="InterPro" id="IPR011129">
    <property type="entry name" value="CSD"/>
</dbReference>
<dbReference type="InterPro" id="IPR019844">
    <property type="entry name" value="CSD_CS"/>
</dbReference>
<dbReference type="InterPro" id="IPR002059">
    <property type="entry name" value="CSP_DNA-bd"/>
</dbReference>
<dbReference type="InterPro" id="IPR012340">
    <property type="entry name" value="NA-bd_OB-fold"/>
</dbReference>
<dbReference type="PANTHER" id="PTHR46565">
    <property type="entry name" value="COLD SHOCK DOMAIN PROTEIN 2"/>
    <property type="match status" value="1"/>
</dbReference>
<dbReference type="PANTHER" id="PTHR46565:SF20">
    <property type="entry name" value="COLD SHOCK DOMAIN-CONTAINING PROTEIN 4"/>
    <property type="match status" value="1"/>
</dbReference>
<dbReference type="Pfam" id="PF00313">
    <property type="entry name" value="CSD"/>
    <property type="match status" value="1"/>
</dbReference>
<dbReference type="PIRSF" id="PIRSF002599">
    <property type="entry name" value="Cold_shock_A"/>
    <property type="match status" value="1"/>
</dbReference>
<dbReference type="PRINTS" id="PR00050">
    <property type="entry name" value="COLDSHOCK"/>
</dbReference>
<dbReference type="SMART" id="SM00357">
    <property type="entry name" value="CSP"/>
    <property type="match status" value="1"/>
</dbReference>
<dbReference type="SUPFAM" id="SSF50249">
    <property type="entry name" value="Nucleic acid-binding proteins"/>
    <property type="match status" value="1"/>
</dbReference>
<dbReference type="PROSITE" id="PS00352">
    <property type="entry name" value="CSD_1"/>
    <property type="match status" value="1"/>
</dbReference>
<dbReference type="PROSITE" id="PS51857">
    <property type="entry name" value="CSD_2"/>
    <property type="match status" value="1"/>
</dbReference>
<gene>
    <name type="primary">cspA</name>
    <name type="ordered locus">RBE_1077</name>
</gene>
<evidence type="ECO:0000250" key="1"/>
<evidence type="ECO:0000305" key="2"/>
<proteinExistence type="inferred from homology"/>
<feature type="chain" id="PRO_0000281063" description="Cold shock-like protein CspA">
    <location>
        <begin position="1"/>
        <end position="70"/>
    </location>
</feature>
<feature type="domain" description="CSD">
    <location>
        <begin position="7"/>
        <end position="67"/>
    </location>
</feature>
<name>CSPA_RICBR</name>
<protein>
    <recommendedName>
        <fullName>Cold shock-like protein CspA</fullName>
    </recommendedName>
</protein>
<keyword id="KW-0010">Activator</keyword>
<keyword id="KW-0963">Cytoplasm</keyword>
<keyword id="KW-0238">DNA-binding</keyword>
<keyword id="KW-0804">Transcription</keyword>
<keyword id="KW-0805">Transcription regulation</keyword>
<reference key="1">
    <citation type="journal article" date="2006" name="PLoS Genet.">
        <title>Genome sequence of Rickettsia bellii illuminates the role of amoebae in gene exchanges between intracellular pathogens.</title>
        <authorList>
            <person name="Ogata H."/>
            <person name="La Scola B."/>
            <person name="Audic S."/>
            <person name="Renesto P."/>
            <person name="Blanc G."/>
            <person name="Robert C."/>
            <person name="Fournier P.-E."/>
            <person name="Claverie J.-M."/>
            <person name="Raoult D."/>
        </authorList>
    </citation>
    <scope>NUCLEOTIDE SEQUENCE [LARGE SCALE GENOMIC DNA]</scope>
    <source>
        <strain>RML369-C</strain>
    </source>
</reference>